<dbReference type="EMBL" id="CP000409">
    <property type="protein sequence ID" value="ABV73082.1"/>
    <property type="molecule type" value="Genomic_DNA"/>
</dbReference>
<dbReference type="RefSeq" id="WP_012148283.1">
    <property type="nucleotide sequence ID" value="NC_009879.1"/>
</dbReference>
<dbReference type="SMR" id="A8EXJ9"/>
<dbReference type="STRING" id="293613.A1E_00670"/>
<dbReference type="KEGG" id="rcm:A1E_00670"/>
<dbReference type="eggNOG" id="COG0048">
    <property type="taxonomic scope" value="Bacteria"/>
</dbReference>
<dbReference type="HOGENOM" id="CLU_104295_1_3_5"/>
<dbReference type="Proteomes" id="UP000007056">
    <property type="component" value="Chromosome"/>
</dbReference>
<dbReference type="GO" id="GO:0015935">
    <property type="term" value="C:small ribosomal subunit"/>
    <property type="evidence" value="ECO:0007669"/>
    <property type="project" value="InterPro"/>
</dbReference>
<dbReference type="GO" id="GO:0019843">
    <property type="term" value="F:rRNA binding"/>
    <property type="evidence" value="ECO:0007669"/>
    <property type="project" value="UniProtKB-UniRule"/>
</dbReference>
<dbReference type="GO" id="GO:0003735">
    <property type="term" value="F:structural constituent of ribosome"/>
    <property type="evidence" value="ECO:0007669"/>
    <property type="project" value="InterPro"/>
</dbReference>
<dbReference type="GO" id="GO:0000049">
    <property type="term" value="F:tRNA binding"/>
    <property type="evidence" value="ECO:0007669"/>
    <property type="project" value="UniProtKB-UniRule"/>
</dbReference>
<dbReference type="GO" id="GO:0006412">
    <property type="term" value="P:translation"/>
    <property type="evidence" value="ECO:0007669"/>
    <property type="project" value="UniProtKB-UniRule"/>
</dbReference>
<dbReference type="CDD" id="cd03368">
    <property type="entry name" value="Ribosomal_S12"/>
    <property type="match status" value="1"/>
</dbReference>
<dbReference type="FunFam" id="2.40.50.140:FF:000192">
    <property type="entry name" value="Mitochondrial ribosomal protein S12"/>
    <property type="match status" value="1"/>
</dbReference>
<dbReference type="Gene3D" id="2.40.50.140">
    <property type="entry name" value="Nucleic acid-binding proteins"/>
    <property type="match status" value="1"/>
</dbReference>
<dbReference type="HAMAP" id="MF_00403_B">
    <property type="entry name" value="Ribosomal_uS12_B"/>
    <property type="match status" value="1"/>
</dbReference>
<dbReference type="InterPro" id="IPR012340">
    <property type="entry name" value="NA-bd_OB-fold"/>
</dbReference>
<dbReference type="InterPro" id="IPR006032">
    <property type="entry name" value="Ribosomal_uS12"/>
</dbReference>
<dbReference type="InterPro" id="IPR005679">
    <property type="entry name" value="Ribosomal_uS12_bac"/>
</dbReference>
<dbReference type="NCBIfam" id="TIGR00981">
    <property type="entry name" value="rpsL_bact"/>
    <property type="match status" value="1"/>
</dbReference>
<dbReference type="PANTHER" id="PTHR11652">
    <property type="entry name" value="30S RIBOSOMAL PROTEIN S12 FAMILY MEMBER"/>
    <property type="match status" value="1"/>
</dbReference>
<dbReference type="Pfam" id="PF00164">
    <property type="entry name" value="Ribosom_S12_S23"/>
    <property type="match status" value="1"/>
</dbReference>
<dbReference type="PIRSF" id="PIRSF002133">
    <property type="entry name" value="Ribosomal_S12/S23"/>
    <property type="match status" value="1"/>
</dbReference>
<dbReference type="PRINTS" id="PR01034">
    <property type="entry name" value="RIBOSOMALS12"/>
</dbReference>
<dbReference type="SUPFAM" id="SSF50249">
    <property type="entry name" value="Nucleic acid-binding proteins"/>
    <property type="match status" value="1"/>
</dbReference>
<dbReference type="PROSITE" id="PS00055">
    <property type="entry name" value="RIBOSOMAL_S12"/>
    <property type="match status" value="1"/>
</dbReference>
<feature type="chain" id="PRO_1000049807" description="Small ribosomal subunit protein uS12">
    <location>
        <begin position="1"/>
        <end position="129"/>
    </location>
</feature>
<feature type="region of interest" description="Disordered" evidence="3">
    <location>
        <begin position="1"/>
        <end position="25"/>
    </location>
</feature>
<feature type="region of interest" description="Disordered" evidence="3">
    <location>
        <begin position="110"/>
        <end position="129"/>
    </location>
</feature>
<feature type="compositionally biased region" description="Basic residues" evidence="3">
    <location>
        <begin position="10"/>
        <end position="20"/>
    </location>
</feature>
<feature type="modified residue" description="3-methylthioaspartic acid" evidence="1">
    <location>
        <position position="89"/>
    </location>
</feature>
<accession>A8EXJ9</accession>
<gene>
    <name evidence="2" type="primary">rpsL</name>
    <name type="ordered locus">A1E_00670</name>
</gene>
<proteinExistence type="inferred from homology"/>
<evidence type="ECO:0000250" key="1"/>
<evidence type="ECO:0000255" key="2">
    <source>
        <dbReference type="HAMAP-Rule" id="MF_00403"/>
    </source>
</evidence>
<evidence type="ECO:0000256" key="3">
    <source>
        <dbReference type="SAM" id="MobiDB-lite"/>
    </source>
</evidence>
<evidence type="ECO:0000305" key="4"/>
<reference key="1">
    <citation type="submission" date="2007-09" db="EMBL/GenBank/DDBJ databases">
        <title>Complete genome sequence of Rickettsia canadensis.</title>
        <authorList>
            <person name="Madan A."/>
            <person name="Fahey J."/>
            <person name="Helton E."/>
            <person name="Ketteman M."/>
            <person name="Madan A."/>
            <person name="Rodrigues S."/>
            <person name="Sanchez A."/>
            <person name="Whiting M."/>
            <person name="Dasch G."/>
            <person name="Eremeeva M."/>
        </authorList>
    </citation>
    <scope>NUCLEOTIDE SEQUENCE [LARGE SCALE GENOMIC DNA]</scope>
    <source>
        <strain>McKiel</strain>
    </source>
</reference>
<organism>
    <name type="scientific">Rickettsia canadensis (strain McKiel)</name>
    <dbReference type="NCBI Taxonomy" id="293613"/>
    <lineage>
        <taxon>Bacteria</taxon>
        <taxon>Pseudomonadati</taxon>
        <taxon>Pseudomonadota</taxon>
        <taxon>Alphaproteobacteria</taxon>
        <taxon>Rickettsiales</taxon>
        <taxon>Rickettsiaceae</taxon>
        <taxon>Rickettsieae</taxon>
        <taxon>Rickettsia</taxon>
        <taxon>belli group</taxon>
    </lineage>
</organism>
<name>RS12_RICCK</name>
<sequence>MPTYNQLVRFGRKSKTRKTKSPALESNPFKSGVCLVVKTVTPKKPNSALRKIATVRLSNKRTVNAYIPGEKHSVKEHDRVLVRGGQVPDLPGVKYHIVLGAYDIAGVKGRKQGRSRYGAPSKQVAVTKK</sequence>
<keyword id="KW-0488">Methylation</keyword>
<keyword id="KW-0687">Ribonucleoprotein</keyword>
<keyword id="KW-0689">Ribosomal protein</keyword>
<keyword id="KW-0694">RNA-binding</keyword>
<keyword id="KW-0699">rRNA-binding</keyword>
<keyword id="KW-0820">tRNA-binding</keyword>
<protein>
    <recommendedName>
        <fullName evidence="2">Small ribosomal subunit protein uS12</fullName>
    </recommendedName>
    <alternativeName>
        <fullName evidence="4">30S ribosomal protein S12</fullName>
    </alternativeName>
</protein>
<comment type="function">
    <text evidence="2">With S4 and S5 plays an important role in translational accuracy.</text>
</comment>
<comment type="function">
    <text evidence="2">Interacts with and stabilizes bases of the 16S rRNA that are involved in tRNA selection in the A site and with the mRNA backbone. Located at the interface of the 30S and 50S subunits, it traverses the body of the 30S subunit contacting proteins on the other side and probably holding the rRNA structure together. The combined cluster of proteins S8, S12 and S17 appears to hold together the shoulder and platform of the 30S subunit.</text>
</comment>
<comment type="subunit">
    <text evidence="2">Part of the 30S ribosomal subunit. Contacts proteins S8 and S17. May interact with IF1 in the 30S initiation complex.</text>
</comment>
<comment type="similarity">
    <text evidence="2">Belongs to the universal ribosomal protein uS12 family.</text>
</comment>